<proteinExistence type="evidence at protein level"/>
<evidence type="ECO:0000255" key="1">
    <source>
        <dbReference type="PROSITE-ProRule" id="PRU00541"/>
    </source>
</evidence>
<evidence type="ECO:0000255" key="2">
    <source>
        <dbReference type="PROSITE-ProRule" id="PRU00542"/>
    </source>
</evidence>
<evidence type="ECO:0000255" key="3">
    <source>
        <dbReference type="PROSITE-ProRule" id="PRU00549"/>
    </source>
</evidence>
<evidence type="ECO:0000256" key="4">
    <source>
        <dbReference type="SAM" id="MobiDB-lite"/>
    </source>
</evidence>
<evidence type="ECO:0000269" key="5">
    <source>
    </source>
</evidence>
<evidence type="ECO:0000269" key="6">
    <source>
    </source>
</evidence>
<evidence type="ECO:0000269" key="7">
    <source>
    </source>
</evidence>
<evidence type="ECO:0000269" key="8">
    <source>
    </source>
</evidence>
<evidence type="ECO:0000269" key="9">
    <source>
    </source>
</evidence>
<evidence type="ECO:0000269" key="10">
    <source>
    </source>
</evidence>
<evidence type="ECO:0000305" key="11"/>
<evidence type="ECO:0007829" key="12">
    <source>
        <dbReference type="PDB" id="4M6B"/>
    </source>
</evidence>
<evidence type="ECO:0007829" key="13">
    <source>
        <dbReference type="PDB" id="5I9E"/>
    </source>
</evidence>
<accession>Q05471</accession>
<accession>D6VSW6</accession>
<dbReference type="EC" id="3.6.4.12"/>
<dbReference type="EMBL" id="U51032">
    <property type="protein sequence ID" value="AAB64770.1"/>
    <property type="molecule type" value="Genomic_DNA"/>
</dbReference>
<dbReference type="EMBL" id="BK006938">
    <property type="protein sequence ID" value="DAA12176.1"/>
    <property type="molecule type" value="Genomic_DNA"/>
</dbReference>
<dbReference type="PIR" id="S70099">
    <property type="entry name" value="S70099"/>
</dbReference>
<dbReference type="RefSeq" id="NP_010621.1">
    <property type="nucleotide sequence ID" value="NM_001180642.1"/>
</dbReference>
<dbReference type="PDB" id="4M6B">
    <property type="method" value="X-ray"/>
    <property type="resolution" value="1.78 A"/>
    <property type="chains" value="C/F=590-639"/>
</dbReference>
<dbReference type="PDB" id="5I9E">
    <property type="method" value="X-ray"/>
    <property type="resolution" value="2.80 A"/>
    <property type="chains" value="E/H=340-410"/>
</dbReference>
<dbReference type="PDB" id="6GEJ">
    <property type="method" value="EM"/>
    <property type="resolution" value="3.60 A"/>
    <property type="chains" value="M=1-1514"/>
</dbReference>
<dbReference type="PDB" id="6GEN">
    <property type="method" value="EM"/>
    <property type="resolution" value="3.60 A"/>
    <property type="chains" value="M=1-1514"/>
</dbReference>
<dbReference type="PDB" id="8QKU">
    <property type="method" value="EM"/>
    <property type="resolution" value="3.80 A"/>
    <property type="chains" value="M=1-1514"/>
</dbReference>
<dbReference type="PDB" id="8QKV">
    <property type="method" value="EM"/>
    <property type="resolution" value="4.70 A"/>
    <property type="chains" value="M=1-1514"/>
</dbReference>
<dbReference type="PDB" id="8QYV">
    <property type="method" value="EM"/>
    <property type="resolution" value="3.50 A"/>
    <property type="chains" value="M=1-1514"/>
</dbReference>
<dbReference type="PDB" id="8QZ0">
    <property type="method" value="EM"/>
    <property type="resolution" value="3.80 A"/>
    <property type="chains" value="M=1-1514"/>
</dbReference>
<dbReference type="PDB" id="9B1D">
    <property type="method" value="EM"/>
    <property type="resolution" value="3.30 A"/>
    <property type="chains" value="A=1-1514"/>
</dbReference>
<dbReference type="PDB" id="9B1E">
    <property type="method" value="EM"/>
    <property type="resolution" value="4.40 A"/>
    <property type="chains" value="A=1-1514"/>
</dbReference>
<dbReference type="PDB" id="9FBW">
    <property type="method" value="EM"/>
    <property type="resolution" value="4.40 A"/>
    <property type="chains" value="M=1-1514"/>
</dbReference>
<dbReference type="PDBsum" id="4M6B"/>
<dbReference type="PDBsum" id="5I9E"/>
<dbReference type="PDBsum" id="6GEJ"/>
<dbReference type="PDBsum" id="6GEN"/>
<dbReference type="PDBsum" id="8QKU"/>
<dbReference type="PDBsum" id="8QKV"/>
<dbReference type="PDBsum" id="8QYV"/>
<dbReference type="PDBsum" id="8QZ0"/>
<dbReference type="PDBsum" id="9B1D"/>
<dbReference type="PDBsum" id="9B1E"/>
<dbReference type="PDBsum" id="9FBW"/>
<dbReference type="EMDB" id="EMD-18471"/>
<dbReference type="EMDB" id="EMD-18472"/>
<dbReference type="EMDB" id="EMD-18764"/>
<dbReference type="EMDB" id="EMD-18769"/>
<dbReference type="EMDB" id="EMD-4395"/>
<dbReference type="EMDB" id="EMD-4396"/>
<dbReference type="EMDB" id="EMD-50297"/>
<dbReference type="SMR" id="Q05471"/>
<dbReference type="BioGRID" id="32391">
    <property type="interactions" value="725"/>
</dbReference>
<dbReference type="ComplexPortal" id="CPX-2122">
    <property type="entry name" value="Swr1 chromatin remodelling complex"/>
</dbReference>
<dbReference type="DIP" id="DIP-2845N"/>
<dbReference type="FunCoup" id="Q05471">
    <property type="interactions" value="283"/>
</dbReference>
<dbReference type="IntAct" id="Q05471">
    <property type="interactions" value="49"/>
</dbReference>
<dbReference type="MINT" id="Q05471"/>
<dbReference type="STRING" id="4932.YDR334W"/>
<dbReference type="GlyGen" id="Q05471">
    <property type="glycosylation" value="1 site"/>
</dbReference>
<dbReference type="iPTMnet" id="Q05471"/>
<dbReference type="PaxDb" id="4932-YDR334W"/>
<dbReference type="PeptideAtlas" id="Q05471"/>
<dbReference type="TopDownProteomics" id="Q05471"/>
<dbReference type="EnsemblFungi" id="YDR334W_mRNA">
    <property type="protein sequence ID" value="YDR334W"/>
    <property type="gene ID" value="YDR334W"/>
</dbReference>
<dbReference type="GeneID" id="851934"/>
<dbReference type="KEGG" id="sce:YDR334W"/>
<dbReference type="AGR" id="SGD:S000002742"/>
<dbReference type="SGD" id="S000002742">
    <property type="gene designation" value="SWR1"/>
</dbReference>
<dbReference type="VEuPathDB" id="FungiDB:YDR334W"/>
<dbReference type="eggNOG" id="KOG0391">
    <property type="taxonomic scope" value="Eukaryota"/>
</dbReference>
<dbReference type="GeneTree" id="ENSGT00940000167340"/>
<dbReference type="HOGENOM" id="CLU_000315_24_4_1"/>
<dbReference type="InParanoid" id="Q05471"/>
<dbReference type="OMA" id="AFQQWFG"/>
<dbReference type="OrthoDB" id="372624at2759"/>
<dbReference type="BioCyc" id="YEAST:G3O-29890-MONOMER"/>
<dbReference type="BioGRID-ORCS" id="851934">
    <property type="hits" value="0 hits in 10 CRISPR screens"/>
</dbReference>
<dbReference type="EvolutionaryTrace" id="Q05471"/>
<dbReference type="PRO" id="PR:Q05471"/>
<dbReference type="Proteomes" id="UP000002311">
    <property type="component" value="Chromosome IV"/>
</dbReference>
<dbReference type="RNAct" id="Q05471">
    <property type="molecule type" value="protein"/>
</dbReference>
<dbReference type="GO" id="GO:0000785">
    <property type="term" value="C:chromatin"/>
    <property type="evidence" value="ECO:0000314"/>
    <property type="project" value="ComplexPortal"/>
</dbReference>
<dbReference type="GO" id="GO:0005829">
    <property type="term" value="C:cytosol"/>
    <property type="evidence" value="ECO:0000314"/>
    <property type="project" value="SGD"/>
</dbReference>
<dbReference type="GO" id="GO:0005634">
    <property type="term" value="C:nucleus"/>
    <property type="evidence" value="ECO:0000314"/>
    <property type="project" value="SGD"/>
</dbReference>
<dbReference type="GO" id="GO:0000812">
    <property type="term" value="C:Swr1 complex"/>
    <property type="evidence" value="ECO:0000314"/>
    <property type="project" value="SGD"/>
</dbReference>
<dbReference type="GO" id="GO:0005524">
    <property type="term" value="F:ATP binding"/>
    <property type="evidence" value="ECO:0007669"/>
    <property type="project" value="UniProtKB-KW"/>
</dbReference>
<dbReference type="GO" id="GO:0016887">
    <property type="term" value="F:ATP hydrolysis activity"/>
    <property type="evidence" value="ECO:0000318"/>
    <property type="project" value="GO_Central"/>
</dbReference>
<dbReference type="GO" id="GO:0003677">
    <property type="term" value="F:DNA binding"/>
    <property type="evidence" value="ECO:0007669"/>
    <property type="project" value="UniProtKB-KW"/>
</dbReference>
<dbReference type="GO" id="GO:0004386">
    <property type="term" value="F:helicase activity"/>
    <property type="evidence" value="ECO:0007669"/>
    <property type="project" value="UniProtKB-KW"/>
</dbReference>
<dbReference type="GO" id="GO:0042393">
    <property type="term" value="F:histone binding"/>
    <property type="evidence" value="ECO:0000318"/>
    <property type="project" value="GO_Central"/>
</dbReference>
<dbReference type="GO" id="GO:0060090">
    <property type="term" value="F:molecular adaptor activity"/>
    <property type="evidence" value="ECO:0000269"/>
    <property type="project" value="DisProt"/>
</dbReference>
<dbReference type="GO" id="GO:0005198">
    <property type="term" value="F:structural molecule activity"/>
    <property type="evidence" value="ECO:0000315"/>
    <property type="project" value="SGD"/>
</dbReference>
<dbReference type="GO" id="GO:0006338">
    <property type="term" value="P:chromatin remodeling"/>
    <property type="evidence" value="ECO:0000314"/>
    <property type="project" value="SGD"/>
</dbReference>
<dbReference type="GO" id="GO:0000725">
    <property type="term" value="P:recombinational repair"/>
    <property type="evidence" value="ECO:0000315"/>
    <property type="project" value="SGD"/>
</dbReference>
<dbReference type="GO" id="GO:0006355">
    <property type="term" value="P:regulation of DNA-templated transcription"/>
    <property type="evidence" value="ECO:0000303"/>
    <property type="project" value="ComplexPortal"/>
</dbReference>
<dbReference type="CDD" id="cd18003">
    <property type="entry name" value="DEXQc_SRCAP"/>
    <property type="match status" value="1"/>
</dbReference>
<dbReference type="CDD" id="cd18793">
    <property type="entry name" value="SF2_C_SNF"/>
    <property type="match status" value="1"/>
</dbReference>
<dbReference type="DisProt" id="DP02295"/>
<dbReference type="FunFam" id="3.40.50.300:FF:002871">
    <property type="entry name" value="Helicase SWR1"/>
    <property type="match status" value="1"/>
</dbReference>
<dbReference type="FunFam" id="3.40.50.10810:FF:000005">
    <property type="entry name" value="Photoperiod-independent early flowering 1"/>
    <property type="match status" value="1"/>
</dbReference>
<dbReference type="Gene3D" id="3.40.50.300">
    <property type="entry name" value="P-loop containing nucleotide triphosphate hydrolases"/>
    <property type="match status" value="1"/>
</dbReference>
<dbReference type="Gene3D" id="1.20.120.850">
    <property type="entry name" value="SWI2/SNF2 ATPases, N-terminal domain"/>
    <property type="match status" value="1"/>
</dbReference>
<dbReference type="Gene3D" id="3.40.50.10810">
    <property type="entry name" value="Tandem AAA-ATPase domain"/>
    <property type="match status" value="1"/>
</dbReference>
<dbReference type="IDEAL" id="IID50223"/>
<dbReference type="InterPro" id="IPR014001">
    <property type="entry name" value="Helicase_ATP-bd"/>
</dbReference>
<dbReference type="InterPro" id="IPR001650">
    <property type="entry name" value="Helicase_C-like"/>
</dbReference>
<dbReference type="InterPro" id="IPR014012">
    <property type="entry name" value="HSA_dom"/>
</dbReference>
<dbReference type="InterPro" id="IPR050520">
    <property type="entry name" value="INO80/SWR1_helicase"/>
</dbReference>
<dbReference type="InterPro" id="IPR027417">
    <property type="entry name" value="P-loop_NTPase"/>
</dbReference>
<dbReference type="InterPro" id="IPR038718">
    <property type="entry name" value="SNF2-like_sf"/>
</dbReference>
<dbReference type="InterPro" id="IPR049730">
    <property type="entry name" value="SNF2/RAD54-like_C"/>
</dbReference>
<dbReference type="InterPro" id="IPR000330">
    <property type="entry name" value="SNF2_N"/>
</dbReference>
<dbReference type="PANTHER" id="PTHR45685:SF1">
    <property type="entry name" value="HELICASE SRCAP"/>
    <property type="match status" value="1"/>
</dbReference>
<dbReference type="PANTHER" id="PTHR45685">
    <property type="entry name" value="HELICASE SRCAP-RELATED"/>
    <property type="match status" value="1"/>
</dbReference>
<dbReference type="Pfam" id="PF00271">
    <property type="entry name" value="Helicase_C"/>
    <property type="match status" value="1"/>
</dbReference>
<dbReference type="Pfam" id="PF07529">
    <property type="entry name" value="HSA"/>
    <property type="match status" value="1"/>
</dbReference>
<dbReference type="Pfam" id="PF00176">
    <property type="entry name" value="SNF2-rel_dom"/>
    <property type="match status" value="1"/>
</dbReference>
<dbReference type="SMART" id="SM00487">
    <property type="entry name" value="DEXDc"/>
    <property type="match status" value="1"/>
</dbReference>
<dbReference type="SMART" id="SM00490">
    <property type="entry name" value="HELICc"/>
    <property type="match status" value="1"/>
</dbReference>
<dbReference type="SMART" id="SM00573">
    <property type="entry name" value="HSA"/>
    <property type="match status" value="1"/>
</dbReference>
<dbReference type="SUPFAM" id="SSF52540">
    <property type="entry name" value="P-loop containing nucleoside triphosphate hydrolases"/>
    <property type="match status" value="2"/>
</dbReference>
<dbReference type="PROSITE" id="PS51192">
    <property type="entry name" value="HELICASE_ATP_BIND_1"/>
    <property type="match status" value="1"/>
</dbReference>
<dbReference type="PROSITE" id="PS51194">
    <property type="entry name" value="HELICASE_CTER"/>
    <property type="match status" value="1"/>
</dbReference>
<dbReference type="PROSITE" id="PS51204">
    <property type="entry name" value="HSA"/>
    <property type="match status" value="1"/>
</dbReference>
<name>SWR1_YEAST</name>
<comment type="function">
    <text evidence="7 8 9 10">Catalytic component of the SWR1 complex which mediates the ATP-dependent exchange of histone H2A for the H2A variant HZT1 leading to transcriptional regulation of selected genes by chromatin remodeling.</text>
</comment>
<comment type="catalytic activity">
    <reaction>
        <text>ATP + H2O = ADP + phosphate + H(+)</text>
        <dbReference type="Rhea" id="RHEA:13065"/>
        <dbReference type="ChEBI" id="CHEBI:15377"/>
        <dbReference type="ChEBI" id="CHEBI:15378"/>
        <dbReference type="ChEBI" id="CHEBI:30616"/>
        <dbReference type="ChEBI" id="CHEBI:43474"/>
        <dbReference type="ChEBI" id="CHEBI:456216"/>
        <dbReference type="EC" id="3.6.4.12"/>
    </reaction>
</comment>
<comment type="subunit">
    <text evidence="7 8 9">Component of the SWR1 chromatin-remodeling complex composed of at least ACT1, ARP4, RVB1, RVB2, ARP6, YAF9, VPS71, VPS72, SWC3, SWC4, SWC5, SWC7 and SWR1, and perhaps BDF1.</text>
</comment>
<comment type="interaction">
    <interactant intactId="EBI-22102">
        <id>Q05471</id>
    </interactant>
    <interactant intactId="EBI-3493">
        <id>P35817</id>
        <label>BDF1</label>
    </interactant>
    <organismsDiffer>false</organismsDiffer>
    <experiments>4</experiments>
</comment>
<comment type="interaction">
    <interactant intactId="EBI-22102">
        <id>Q05471</id>
    </interactant>
    <interactant intactId="EBI-8080">
        <id>Q12692</id>
        <label>HTZ1</label>
    </interactant>
    <organismsDiffer>false</organismsDiffer>
    <experiments>10</experiments>
</comment>
<comment type="interaction">
    <interactant intactId="EBI-22102">
        <id>Q05471</id>
    </interactant>
    <interactant intactId="EBI-23061">
        <id>P53201</id>
        <label>SWC4</label>
    </interactant>
    <organismsDiffer>false</organismsDiffer>
    <experiments>8</experiments>
</comment>
<comment type="subcellular location">
    <subcellularLocation>
        <location evidence="3 5">Nucleus</location>
    </subcellularLocation>
</comment>
<comment type="miscellaneous">
    <text evidence="6">Present with 656 molecules/cell in log phase SD medium.</text>
</comment>
<comment type="similarity">
    <text evidence="11">Belongs to the SNF2/RAD54 helicase family. SWR1 subfamily.</text>
</comment>
<reference key="1">
    <citation type="journal article" date="1997" name="Nature">
        <title>The nucleotide sequence of Saccharomyces cerevisiae chromosome IV.</title>
        <authorList>
            <person name="Jacq C."/>
            <person name="Alt-Moerbe J."/>
            <person name="Andre B."/>
            <person name="Arnold W."/>
            <person name="Bahr A."/>
            <person name="Ballesta J.P.G."/>
            <person name="Bargues M."/>
            <person name="Baron L."/>
            <person name="Becker A."/>
            <person name="Biteau N."/>
            <person name="Bloecker H."/>
            <person name="Blugeon C."/>
            <person name="Boskovic J."/>
            <person name="Brandt P."/>
            <person name="Brueckner M."/>
            <person name="Buitrago M.J."/>
            <person name="Coster F."/>
            <person name="Delaveau T."/>
            <person name="del Rey F."/>
            <person name="Dujon B."/>
            <person name="Eide L.G."/>
            <person name="Garcia-Cantalejo J.M."/>
            <person name="Goffeau A."/>
            <person name="Gomez-Peris A."/>
            <person name="Granotier C."/>
            <person name="Hanemann V."/>
            <person name="Hankeln T."/>
            <person name="Hoheisel J.D."/>
            <person name="Jaeger W."/>
            <person name="Jimenez A."/>
            <person name="Jonniaux J.-L."/>
            <person name="Kraemer C."/>
            <person name="Kuester H."/>
            <person name="Laamanen P."/>
            <person name="Legros Y."/>
            <person name="Louis E.J."/>
            <person name="Moeller-Rieker S."/>
            <person name="Monnet A."/>
            <person name="Moro M."/>
            <person name="Mueller-Auer S."/>
            <person name="Nussbaumer B."/>
            <person name="Paricio N."/>
            <person name="Paulin L."/>
            <person name="Perea J."/>
            <person name="Perez-Alonso M."/>
            <person name="Perez-Ortin J.E."/>
            <person name="Pohl T.M."/>
            <person name="Prydz H."/>
            <person name="Purnelle B."/>
            <person name="Rasmussen S.W."/>
            <person name="Remacha M.A."/>
            <person name="Revuelta J.L."/>
            <person name="Rieger M."/>
            <person name="Salom D."/>
            <person name="Saluz H.P."/>
            <person name="Saiz J.E."/>
            <person name="Saren A.-M."/>
            <person name="Schaefer M."/>
            <person name="Scharfe M."/>
            <person name="Schmidt E.R."/>
            <person name="Schneider C."/>
            <person name="Scholler P."/>
            <person name="Schwarz S."/>
            <person name="Soler-Mira A."/>
            <person name="Urrestarazu L.A."/>
            <person name="Verhasselt P."/>
            <person name="Vissers S."/>
            <person name="Voet M."/>
            <person name="Volckaert G."/>
            <person name="Wagner G."/>
            <person name="Wambutt R."/>
            <person name="Wedler E."/>
            <person name="Wedler H."/>
            <person name="Woelfl S."/>
            <person name="Harris D.E."/>
            <person name="Bowman S."/>
            <person name="Brown D."/>
            <person name="Churcher C.M."/>
            <person name="Connor R."/>
            <person name="Dedman K."/>
            <person name="Gentles S."/>
            <person name="Hamlin N."/>
            <person name="Hunt S."/>
            <person name="Jones L."/>
            <person name="McDonald S."/>
            <person name="Murphy L.D."/>
            <person name="Niblett D."/>
            <person name="Odell C."/>
            <person name="Oliver K."/>
            <person name="Rajandream M.A."/>
            <person name="Richards C."/>
            <person name="Shore L."/>
            <person name="Walsh S.V."/>
            <person name="Barrell B.G."/>
            <person name="Dietrich F.S."/>
            <person name="Mulligan J.T."/>
            <person name="Allen E."/>
            <person name="Araujo R."/>
            <person name="Aviles E."/>
            <person name="Berno A."/>
            <person name="Carpenter J."/>
            <person name="Chen E."/>
            <person name="Cherry J.M."/>
            <person name="Chung E."/>
            <person name="Duncan M."/>
            <person name="Hunicke-Smith S."/>
            <person name="Hyman R.W."/>
            <person name="Komp C."/>
            <person name="Lashkari D."/>
            <person name="Lew H."/>
            <person name="Lin D."/>
            <person name="Mosedale D."/>
            <person name="Nakahara K."/>
            <person name="Namath A."/>
            <person name="Oefner P."/>
            <person name="Oh C."/>
            <person name="Petel F.X."/>
            <person name="Roberts D."/>
            <person name="Schramm S."/>
            <person name="Schroeder M."/>
            <person name="Shogren T."/>
            <person name="Shroff N."/>
            <person name="Winant A."/>
            <person name="Yelton M.A."/>
            <person name="Botstein D."/>
            <person name="Davis R.W."/>
            <person name="Johnston M."/>
            <person name="Andrews S."/>
            <person name="Brinkman R."/>
            <person name="Cooper J."/>
            <person name="Ding H."/>
            <person name="Du Z."/>
            <person name="Favello A."/>
            <person name="Fulton L."/>
            <person name="Gattung S."/>
            <person name="Greco T."/>
            <person name="Hallsworth K."/>
            <person name="Hawkins J."/>
            <person name="Hillier L.W."/>
            <person name="Jier M."/>
            <person name="Johnson D."/>
            <person name="Johnston L."/>
            <person name="Kirsten J."/>
            <person name="Kucaba T."/>
            <person name="Langston Y."/>
            <person name="Latreille P."/>
            <person name="Le T."/>
            <person name="Mardis E."/>
            <person name="Menezes S."/>
            <person name="Miller N."/>
            <person name="Nhan M."/>
            <person name="Pauley A."/>
            <person name="Peluso D."/>
            <person name="Rifkin L."/>
            <person name="Riles L."/>
            <person name="Taich A."/>
            <person name="Trevaskis E."/>
            <person name="Vignati D."/>
            <person name="Wilcox L."/>
            <person name="Wohldman P."/>
            <person name="Vaudin M."/>
            <person name="Wilson R."/>
            <person name="Waterston R."/>
            <person name="Albermann K."/>
            <person name="Hani J."/>
            <person name="Heumann K."/>
            <person name="Kleine K."/>
            <person name="Mewes H.-W."/>
            <person name="Zollner A."/>
            <person name="Zaccaria P."/>
        </authorList>
    </citation>
    <scope>NUCLEOTIDE SEQUENCE [LARGE SCALE GENOMIC DNA]</scope>
    <source>
        <strain>ATCC 204508 / S288c</strain>
    </source>
</reference>
<reference key="2">
    <citation type="journal article" date="2014" name="G3 (Bethesda)">
        <title>The reference genome sequence of Saccharomyces cerevisiae: Then and now.</title>
        <authorList>
            <person name="Engel S.R."/>
            <person name="Dietrich F.S."/>
            <person name="Fisk D.G."/>
            <person name="Binkley G."/>
            <person name="Balakrishnan R."/>
            <person name="Costanzo M.C."/>
            <person name="Dwight S.S."/>
            <person name="Hitz B.C."/>
            <person name="Karra K."/>
            <person name="Nash R.S."/>
            <person name="Weng S."/>
            <person name="Wong E.D."/>
            <person name="Lloyd P."/>
            <person name="Skrzypek M.S."/>
            <person name="Miyasato S.R."/>
            <person name="Simison M."/>
            <person name="Cherry J.M."/>
        </authorList>
    </citation>
    <scope>GENOME REANNOTATION</scope>
    <source>
        <strain>ATCC 204508 / S288c</strain>
    </source>
</reference>
<reference key="3">
    <citation type="journal article" date="2003" name="Mol. Cell">
        <title>Assigning function to yeast proteins by integration of technologies.</title>
        <authorList>
            <person name="Hazbun T.R."/>
            <person name="Malmstroem L."/>
            <person name="Anderson S."/>
            <person name="Graczyk B.J."/>
            <person name="Fox B."/>
            <person name="Riffle M."/>
            <person name="Sundin B.A."/>
            <person name="Aranda J.D."/>
            <person name="McDonald W.H."/>
            <person name="Chiu C.-H."/>
            <person name="Snydsman B.E."/>
            <person name="Bradley P."/>
            <person name="Muller E.G.D."/>
            <person name="Fields S."/>
            <person name="Baker D."/>
            <person name="Yates J.R. III"/>
            <person name="Davis T.N."/>
        </authorList>
    </citation>
    <scope>IDENTIFICATION BY MASS SPECTROMETRY</scope>
</reference>
<reference key="4">
    <citation type="journal article" date="2003" name="Mol. Cell">
        <title>A Snf2 family ATPase complex required for recruitment of the histone H2A variant Htz1.</title>
        <authorList>
            <person name="Krogan N.J."/>
            <person name="Keogh M.-C."/>
            <person name="Datta N."/>
            <person name="Sawa C."/>
            <person name="Ryan O.W."/>
            <person name="Ding H."/>
            <person name="Haw R.A."/>
            <person name="Pootoolal J."/>
            <person name="Tong A."/>
            <person name="Canadien V."/>
            <person name="Richards D.P."/>
            <person name="Wu X."/>
            <person name="Emili A."/>
            <person name="Hughes T.R."/>
            <person name="Buratowski S."/>
            <person name="Greenblatt J.F."/>
        </authorList>
    </citation>
    <scope>FUNCTION OF THE SWR1 COMPLEX</scope>
    <scope>IDENTIFICATION IN THE SWR1 COMPLEX</scope>
    <scope>IDENTIFICATION BY MASS SPECTROMETRY</scope>
</reference>
<reference key="5">
    <citation type="journal article" date="2003" name="Nature">
        <title>Global analysis of protein localization in budding yeast.</title>
        <authorList>
            <person name="Huh W.-K."/>
            <person name="Falvo J.V."/>
            <person name="Gerke L.C."/>
            <person name="Carroll A.S."/>
            <person name="Howson R.W."/>
            <person name="Weissman J.S."/>
            <person name="O'Shea E.K."/>
        </authorList>
    </citation>
    <scope>SUBCELLULAR LOCATION [LARGE SCALE ANALYSIS]</scope>
</reference>
<reference key="6">
    <citation type="journal article" date="2003" name="Nature">
        <title>Global analysis of protein expression in yeast.</title>
        <authorList>
            <person name="Ghaemmaghami S."/>
            <person name="Huh W.-K."/>
            <person name="Bower K."/>
            <person name="Howson R.W."/>
            <person name="Belle A."/>
            <person name="Dephoure N."/>
            <person name="O'Shea E.K."/>
            <person name="Weissman J.S."/>
        </authorList>
    </citation>
    <scope>LEVEL OF PROTEIN EXPRESSION [LARGE SCALE ANALYSIS]</scope>
</reference>
<reference key="7">
    <citation type="journal article" date="2004" name="PLoS Biol.">
        <title>A protein complex containing the conserved Swi2/Snf2-related ATPase Swr1p deposits histone variant H2A.Z into euchromatin.</title>
        <authorList>
            <person name="Kobor M.S."/>
            <person name="Venkatasubrahmanyam S."/>
            <person name="Meneghini M.D."/>
            <person name="Gin J.W."/>
            <person name="Jennings J.L."/>
            <person name="Link A.J."/>
            <person name="Madhani H.D."/>
            <person name="Rine J."/>
        </authorList>
    </citation>
    <scope>FUNCTION</scope>
    <scope>IDENTIFICATION IN THE SWR1 COMPLEX</scope>
    <scope>IDENTIFICATION BY IDENTIFICATION BY MASS SPECTROMETRY</scope>
</reference>
<reference key="8">
    <citation type="journal article" date="2004" name="Proc. Natl. Acad. Sci. U.S.A.">
        <title>Regulation of chromosome stability by the histone H2A variant Htz1, the Swr1 chromatin remodeling complex, and the histone acetyltransferase NuA4.</title>
        <authorList>
            <person name="Krogan N.J."/>
            <person name="Baetz K."/>
            <person name="Keogh M.-C."/>
            <person name="Datta N."/>
            <person name="Sawa C."/>
            <person name="Kwok T.C.Y."/>
            <person name="Thompson N.J."/>
            <person name="Davey M.G."/>
            <person name="Pootoolal J."/>
            <person name="Hughes T.R."/>
            <person name="Emili A."/>
            <person name="Buratowski S."/>
            <person name="Hieter P."/>
            <person name="Greenblatt J.F."/>
        </authorList>
    </citation>
    <scope>FUNCTION</scope>
</reference>
<reference key="9">
    <citation type="journal article" date="2004" name="Science">
        <title>ATP-driven exchange of histone H2AZ variant catalyzed by SWR1 chromatin remodeling complex.</title>
        <authorList>
            <person name="Mizuguchi G."/>
            <person name="Shen X."/>
            <person name="Landry J."/>
            <person name="Wu W.-H."/>
            <person name="Sen S."/>
            <person name="Wu C."/>
        </authorList>
    </citation>
    <scope>IDENTIFICATION IN THE SWR1 COMPLEX</scope>
    <scope>FUNCTION OF THE SWR1 COMPLEX</scope>
    <scope>IDENTIFICATION BY MASS SPECTROMETRY</scope>
</reference>
<feature type="chain" id="PRO_0000074375" description="Helicase SWR1">
    <location>
        <begin position="1"/>
        <end position="1514"/>
    </location>
</feature>
<feature type="domain" description="HSA" evidence="3">
    <location>
        <begin position="339"/>
        <end position="411"/>
    </location>
</feature>
<feature type="domain" description="Helicase ATP-binding" evidence="1">
    <location>
        <begin position="708"/>
        <end position="873"/>
    </location>
</feature>
<feature type="domain" description="Helicase C-terminal" evidence="2">
    <location>
        <begin position="1247"/>
        <end position="1400"/>
    </location>
</feature>
<feature type="region of interest" description="Disordered" evidence="4">
    <location>
        <begin position="465"/>
        <end position="524"/>
    </location>
</feature>
<feature type="region of interest" description="Disordered" evidence="4">
    <location>
        <begin position="538"/>
        <end position="641"/>
    </location>
</feature>
<feature type="region of interest" description="Disordered" evidence="4">
    <location>
        <begin position="1469"/>
        <end position="1490"/>
    </location>
</feature>
<feature type="short sequence motif" description="DEAH box">
    <location>
        <begin position="824"/>
        <end position="827"/>
    </location>
</feature>
<feature type="compositionally biased region" description="Polar residues" evidence="4">
    <location>
        <begin position="465"/>
        <end position="480"/>
    </location>
</feature>
<feature type="compositionally biased region" description="Acidic residues" evidence="4">
    <location>
        <begin position="484"/>
        <end position="508"/>
    </location>
</feature>
<feature type="compositionally biased region" description="Polar residues" evidence="4">
    <location>
        <begin position="513"/>
        <end position="524"/>
    </location>
</feature>
<feature type="compositionally biased region" description="Basic and acidic residues" evidence="4">
    <location>
        <begin position="547"/>
        <end position="563"/>
    </location>
</feature>
<feature type="compositionally biased region" description="Low complexity" evidence="4">
    <location>
        <begin position="564"/>
        <end position="586"/>
    </location>
</feature>
<feature type="compositionally biased region" description="Basic and acidic residues" evidence="4">
    <location>
        <begin position="588"/>
        <end position="597"/>
    </location>
</feature>
<feature type="compositionally biased region" description="Acidic residues" evidence="4">
    <location>
        <begin position="612"/>
        <end position="623"/>
    </location>
</feature>
<feature type="compositionally biased region" description="Basic and acidic residues" evidence="4">
    <location>
        <begin position="1475"/>
        <end position="1490"/>
    </location>
</feature>
<feature type="binding site" evidence="1">
    <location>
        <begin position="721"/>
        <end position="728"/>
    </location>
    <ligand>
        <name>ATP</name>
        <dbReference type="ChEBI" id="CHEBI:30616"/>
    </ligand>
</feature>
<feature type="helix" evidence="13">
    <location>
        <begin position="353"/>
        <end position="389"/>
    </location>
</feature>
<feature type="helix" evidence="12">
    <location>
        <begin position="602"/>
        <end position="605"/>
    </location>
</feature>
<organism>
    <name type="scientific">Saccharomyces cerevisiae (strain ATCC 204508 / S288c)</name>
    <name type="common">Baker's yeast</name>
    <dbReference type="NCBI Taxonomy" id="559292"/>
    <lineage>
        <taxon>Eukaryota</taxon>
        <taxon>Fungi</taxon>
        <taxon>Dikarya</taxon>
        <taxon>Ascomycota</taxon>
        <taxon>Saccharomycotina</taxon>
        <taxon>Saccharomycetes</taxon>
        <taxon>Saccharomycetales</taxon>
        <taxon>Saccharomycetaceae</taxon>
        <taxon>Saccharomyces</taxon>
    </lineage>
</organism>
<gene>
    <name type="primary">SWR1</name>
    <name type="ordered locus">YDR334W</name>
    <name type="ORF">D9651.6</name>
</gene>
<keyword id="KW-0002">3D-structure</keyword>
<keyword id="KW-0010">Activator</keyword>
<keyword id="KW-0067">ATP-binding</keyword>
<keyword id="KW-0156">Chromatin regulator</keyword>
<keyword id="KW-0238">DNA-binding</keyword>
<keyword id="KW-0347">Helicase</keyword>
<keyword id="KW-0378">Hydrolase</keyword>
<keyword id="KW-0547">Nucleotide-binding</keyword>
<keyword id="KW-0539">Nucleus</keyword>
<keyword id="KW-1185">Reference proteome</keyword>
<keyword id="KW-0804">Transcription</keyword>
<keyword id="KW-0805">Transcription regulation</keyword>
<protein>
    <recommendedName>
        <fullName>Helicase SWR1</fullName>
        <ecNumber>3.6.4.12</ecNumber>
    </recommendedName>
    <alternativeName>
        <fullName>Swi2/Snf2-related 1</fullName>
    </alternativeName>
</protein>
<sequence length="1514" mass="174530">MTTSRKSHAKDKKAGGEQDLADLKFRYDLLTNELFHLREFVSLVDYDPTHFNDSESFQKFLRETHLSLEERGEKFTDDVAKKGTNGDLTRRRRNLRTSTVVSSETTNEKKGDIELKLESIAPLVRNKCEELKYKLSDHSNRKSIVPQKRPIQHLKKREAAKSLKFKSERKENPLPLHEHIAEERYDHIAKVEEPSEAFTIKCPSDDSSFENTSEHYSDNFYFTTSSEEEDIKKKRGRKKKKPRIKLVVHPPKQTITNPLHVVKPGYESLHEYIASFKSLEDDLTLEEYNKYIDEQRRLLSRLKKGIENGALKYDKETDSLQPITSKEIKTIITYKPDPISYFYKQQDLQIHTDHLINQGIHMSKLFRSSTKARIARAKKVSQMIEQHFKHVAGAEERKAKEEERHKKSLARFAVQAVKKRWNMAEKAYRILRKDEEEQLKRIEGKQHLSKMLEKSTQLLEAQLNQVNDDGRSSTPSSDSNDVLSESDDDMDDELSTSSDEDEEVDADVGLENSPASTEATPTDESLNLIQLKEKYGHFNGSSTVYDSRNKDEKFPTLDKHESSSSESSVMTGEESSIYSSSENESQNENDRESDDKTPSVGLSALFGKGEESDGDLDLDDSEDFTVNSSSVEGEELEKDQVDNSAATFERAGDFVHTQNENRDDIKDVEEDAETKVQEEQLSVVDVPVPSLLRGNLRTYQKQGLNWLASLYNNHTNGILADEMGLGKTIQTISLLAYLACEKENWGPHLIVVPTSVLLNWEMEFKRFAPGFKVLTYYGSPQQRKEKRKGWNKPDAFHVCIVSYQLVVQDQHSFKRKRWQYMVLDEAHNIKNFRSTRWQALLNFNTQRRLLLTGTPLQNNLAELWSLLYFLMPQTVIDGKKVSGFADLDAFQQWFGRPVDKIIETGQNFGQDKETKKTVAKLHQVLRPYLLRRLKADVEKQMPAKYEHIVYCKLSKRQRFLYDDFMSRAQTKATLASGNFMSIVNCLMQLRKVCNHPNLFEVRPILTSFVLEHCVASDYKDVERTLLKLFKKNNQVNRVDLDFLNLVFTLNDKDLTSYHAEEISKLTCVKNFVEEVNKLRETNKQLQEEFGEASFLNFQDANQYFKYSNKQKLEGTVDMLNFLKMVNKLRCDRRPIFGKNLIDLLTKDRRVKYDKSSIIDNELIKPLQTRVLDNRKIIDTFAVLTPSAVSLDMRKLALGLNDDSSVGENTRLKVMQNCFEVSNPLHQLQTKLTIAFPDKSLLQYDCGKLQKLAILLQQLKDNGHRALIFTQMTKVLDVLEQFLNYHGYLYMRLDGATKIEDRQILTERFNTDSRITVFILSSRSGGLGINLTGADTVIFYDSDWNPAMDKQCQDRCHRIGQTRDVHIYRFVSEHTIESNILKKANQKRQLDNVVIQEGDFTTDYFSKLSVRDLLGSELPENASGGDKPLIADADVAAKDPRQLERLLAQAEDEDDVKAANLAMREVEIDNDDFDESTEKKAANEEEENHAELDEYEGTAHVDEYMIRFIANGYYY</sequence>